<gene>
    <name type="ordered locus">P9215_13741</name>
</gene>
<comment type="cofactor">
    <cofactor evidence="1">
        <name>Fe(2+)</name>
        <dbReference type="ChEBI" id="CHEBI:29033"/>
    </cofactor>
    <text evidence="1">Binds 1 Fe(2+) ion per subunit.</text>
</comment>
<comment type="cofactor">
    <cofactor evidence="1">
        <name>L-ascorbate</name>
        <dbReference type="ChEBI" id="CHEBI:38290"/>
    </cofactor>
</comment>
<keyword id="KW-0223">Dioxygenase</keyword>
<keyword id="KW-0408">Iron</keyword>
<keyword id="KW-0479">Metal-binding</keyword>
<keyword id="KW-0560">Oxidoreductase</keyword>
<keyword id="KW-0847">Vitamin C</keyword>
<protein>
    <recommendedName>
        <fullName evidence="1">PKHD-type hydroxylase P9215_13741</fullName>
        <ecNumber evidence="1">1.14.11.-</ecNumber>
    </recommendedName>
</protein>
<evidence type="ECO:0000255" key="1">
    <source>
        <dbReference type="HAMAP-Rule" id="MF_00657"/>
    </source>
</evidence>
<name>Y1374_PROM2</name>
<feature type="chain" id="PRO_0000346501" description="PKHD-type hydroxylase P9215_13741">
    <location>
        <begin position="1"/>
        <end position="221"/>
    </location>
</feature>
<feature type="domain" description="Fe2OG dioxygenase" evidence="1">
    <location>
        <begin position="80"/>
        <end position="174"/>
    </location>
</feature>
<feature type="binding site" evidence="1">
    <location>
        <position position="98"/>
    </location>
    <ligand>
        <name>Fe cation</name>
        <dbReference type="ChEBI" id="CHEBI:24875"/>
    </ligand>
</feature>
<feature type="binding site" evidence="1">
    <location>
        <position position="100"/>
    </location>
    <ligand>
        <name>Fe cation</name>
        <dbReference type="ChEBI" id="CHEBI:24875"/>
    </ligand>
</feature>
<feature type="binding site" evidence="1">
    <location>
        <position position="155"/>
    </location>
    <ligand>
        <name>Fe cation</name>
        <dbReference type="ChEBI" id="CHEBI:24875"/>
    </ligand>
</feature>
<feature type="binding site" evidence="1">
    <location>
        <position position="165"/>
    </location>
    <ligand>
        <name>2-oxoglutarate</name>
        <dbReference type="ChEBI" id="CHEBI:16810"/>
    </ligand>
</feature>
<sequence length="221" mass="25011">MNYLTHQLLNPKEINLLKKNLTLQDISWEDGKKTAGNHAAKVKNNLQLDRSSNISKKCTGLIEKKILSDVLIKSFALPKRIHGTMFTKTLKGMKYGRHIDNAFMSSGRADLSFTIFLNEKDKYSGGELLIEGLNSEDKFKLDSGGIIIYPSTYLHSVLEVFSGERFVVVGWIESYVKSIEEREYLFDLDAGARSLLAKHGRSDELDLIFKSYSNLLRTLGE</sequence>
<reference key="1">
    <citation type="journal article" date="2007" name="PLoS Genet.">
        <title>Patterns and implications of gene gain and loss in the evolution of Prochlorococcus.</title>
        <authorList>
            <person name="Kettler G.C."/>
            <person name="Martiny A.C."/>
            <person name="Huang K."/>
            <person name="Zucker J."/>
            <person name="Coleman M.L."/>
            <person name="Rodrigue S."/>
            <person name="Chen F."/>
            <person name="Lapidus A."/>
            <person name="Ferriera S."/>
            <person name="Johnson J."/>
            <person name="Steglich C."/>
            <person name="Church G.M."/>
            <person name="Richardson P."/>
            <person name="Chisholm S.W."/>
        </authorList>
    </citation>
    <scope>NUCLEOTIDE SEQUENCE [LARGE SCALE GENOMIC DNA]</scope>
    <source>
        <strain>MIT 9215</strain>
    </source>
</reference>
<accession>A8G5V8</accession>
<proteinExistence type="inferred from homology"/>
<organism>
    <name type="scientific">Prochlorococcus marinus (strain MIT 9215)</name>
    <dbReference type="NCBI Taxonomy" id="93060"/>
    <lineage>
        <taxon>Bacteria</taxon>
        <taxon>Bacillati</taxon>
        <taxon>Cyanobacteriota</taxon>
        <taxon>Cyanophyceae</taxon>
        <taxon>Synechococcales</taxon>
        <taxon>Prochlorococcaceae</taxon>
        <taxon>Prochlorococcus</taxon>
    </lineage>
</organism>
<dbReference type="EC" id="1.14.11.-" evidence="1"/>
<dbReference type="EMBL" id="CP000825">
    <property type="protein sequence ID" value="ABV50989.1"/>
    <property type="molecule type" value="Genomic_DNA"/>
</dbReference>
<dbReference type="RefSeq" id="WP_012008043.1">
    <property type="nucleotide sequence ID" value="NC_009840.1"/>
</dbReference>
<dbReference type="SMR" id="A8G5V8"/>
<dbReference type="STRING" id="93060.P9215_13741"/>
<dbReference type="KEGG" id="pmh:P9215_13741"/>
<dbReference type="eggNOG" id="COG3128">
    <property type="taxonomic scope" value="Bacteria"/>
</dbReference>
<dbReference type="HOGENOM" id="CLU_106663_0_0_3"/>
<dbReference type="OrthoDB" id="9812472at2"/>
<dbReference type="Proteomes" id="UP000002014">
    <property type="component" value="Chromosome"/>
</dbReference>
<dbReference type="GO" id="GO:0016706">
    <property type="term" value="F:2-oxoglutarate-dependent dioxygenase activity"/>
    <property type="evidence" value="ECO:0007669"/>
    <property type="project" value="UniProtKB-UniRule"/>
</dbReference>
<dbReference type="GO" id="GO:0005506">
    <property type="term" value="F:iron ion binding"/>
    <property type="evidence" value="ECO:0007669"/>
    <property type="project" value="UniProtKB-UniRule"/>
</dbReference>
<dbReference type="GO" id="GO:0031418">
    <property type="term" value="F:L-ascorbic acid binding"/>
    <property type="evidence" value="ECO:0007669"/>
    <property type="project" value="UniProtKB-KW"/>
</dbReference>
<dbReference type="GO" id="GO:0006974">
    <property type="term" value="P:DNA damage response"/>
    <property type="evidence" value="ECO:0007669"/>
    <property type="project" value="TreeGrafter"/>
</dbReference>
<dbReference type="GO" id="GO:0006879">
    <property type="term" value="P:intracellular iron ion homeostasis"/>
    <property type="evidence" value="ECO:0007669"/>
    <property type="project" value="TreeGrafter"/>
</dbReference>
<dbReference type="Gene3D" id="2.60.120.620">
    <property type="entry name" value="q2cbj1_9rhob like domain"/>
    <property type="match status" value="1"/>
</dbReference>
<dbReference type="Gene3D" id="4.10.860.20">
    <property type="entry name" value="Rabenosyn, Rab binding domain"/>
    <property type="match status" value="1"/>
</dbReference>
<dbReference type="HAMAP" id="MF_00657">
    <property type="entry name" value="Hydroxyl_YbiX"/>
    <property type="match status" value="1"/>
</dbReference>
<dbReference type="InterPro" id="IPR005123">
    <property type="entry name" value="Oxoglu/Fe-dep_dioxygenase_dom"/>
</dbReference>
<dbReference type="InterPro" id="IPR041097">
    <property type="entry name" value="PKHD_C"/>
</dbReference>
<dbReference type="InterPro" id="IPR023550">
    <property type="entry name" value="PKHD_hydroxylase"/>
</dbReference>
<dbReference type="InterPro" id="IPR006620">
    <property type="entry name" value="Pro_4_hyd_alph"/>
</dbReference>
<dbReference type="InterPro" id="IPR044862">
    <property type="entry name" value="Pro_4_hyd_alph_FE2OG_OXY"/>
</dbReference>
<dbReference type="NCBIfam" id="NF003974">
    <property type="entry name" value="PRK05467.1-3"/>
    <property type="match status" value="1"/>
</dbReference>
<dbReference type="PANTHER" id="PTHR41536">
    <property type="entry name" value="PKHD-TYPE HYDROXYLASE YBIX"/>
    <property type="match status" value="1"/>
</dbReference>
<dbReference type="PANTHER" id="PTHR41536:SF1">
    <property type="entry name" value="PKHD-TYPE HYDROXYLASE YBIX"/>
    <property type="match status" value="1"/>
</dbReference>
<dbReference type="Pfam" id="PF13640">
    <property type="entry name" value="2OG-FeII_Oxy_3"/>
    <property type="match status" value="1"/>
</dbReference>
<dbReference type="Pfam" id="PF18331">
    <property type="entry name" value="PKHD_C"/>
    <property type="match status" value="1"/>
</dbReference>
<dbReference type="SMART" id="SM00702">
    <property type="entry name" value="P4Hc"/>
    <property type="match status" value="1"/>
</dbReference>
<dbReference type="PROSITE" id="PS51471">
    <property type="entry name" value="FE2OG_OXY"/>
    <property type="match status" value="1"/>
</dbReference>